<reference key="1">
    <citation type="journal article" date="2006" name="J. Bacteriol.">
        <title>Comparison of the genome sequence of the poultry pathogen Bordetella avium with those of B. bronchiseptica, B. pertussis, and B. parapertussis reveals extensive diversity in surface structures associated with host interaction.</title>
        <authorList>
            <person name="Sebaihia M."/>
            <person name="Preston A."/>
            <person name="Maskell D.J."/>
            <person name="Kuzmiak H."/>
            <person name="Connell T.D."/>
            <person name="King N.D."/>
            <person name="Orndorff P.E."/>
            <person name="Miyamoto D.M."/>
            <person name="Thomson N.R."/>
            <person name="Harris D."/>
            <person name="Goble A."/>
            <person name="Lord A."/>
            <person name="Murphy L."/>
            <person name="Quail M.A."/>
            <person name="Rutter S."/>
            <person name="Squares R."/>
            <person name="Squares S."/>
            <person name="Woodward J."/>
            <person name="Parkhill J."/>
            <person name="Temple L.M."/>
        </authorList>
    </citation>
    <scope>NUCLEOTIDE SEQUENCE [LARGE SCALE GENOMIC DNA]</scope>
    <source>
        <strain>197N</strain>
    </source>
</reference>
<name>NAGZ_BORA1</name>
<organism>
    <name type="scientific">Bordetella avium (strain 197N)</name>
    <dbReference type="NCBI Taxonomy" id="360910"/>
    <lineage>
        <taxon>Bacteria</taxon>
        <taxon>Pseudomonadati</taxon>
        <taxon>Pseudomonadota</taxon>
        <taxon>Betaproteobacteria</taxon>
        <taxon>Burkholderiales</taxon>
        <taxon>Alcaligenaceae</taxon>
        <taxon>Bordetella</taxon>
    </lineage>
</organism>
<sequence>MSKSRKPSLLPPGPVMVDVAGGQLTEQEKQRLRHPLVGGVILFARNFENRAQLTALTQDIHAARGEPLLIAVDHEGGRVQRFREDGFTALPAMRTLGEVWDRDPLAAMQLATQTGYVLAAELRACGVDMSFTPVLDLDYGVSKVIGNRAFHADPRVVAMLARALVQGLALTGMAACGKHFPGHGYVEADSHHEIPVDTRTLADILKDDAAPYGWLGDQILPSVMPAHVIYPEVDSQPAGFSRRWVSEILRGQLGYDGVVFSDDLTMEGASVAGDILARAQAALSAGCDMVLVCNRPDLADDLLERLSFTPPAVDRIRRLMPAYAAPDWDSLQADSRYQHARRIQSQIISG</sequence>
<gene>
    <name evidence="1" type="primary">nagZ</name>
    <name type="ordered locus">BAV2457</name>
</gene>
<proteinExistence type="inferred from homology"/>
<comment type="function">
    <text evidence="1">Plays a role in peptidoglycan recycling by cleaving the terminal beta-1,4-linked N-acetylglucosamine (GlcNAc) from peptide-linked peptidoglycan fragments, giving rise to free GlcNAc, anhydro-N-acetylmuramic acid and anhydro-N-acetylmuramic acid-linked peptides.</text>
</comment>
<comment type="catalytic activity">
    <reaction evidence="1">
        <text>Hydrolysis of terminal non-reducing N-acetyl-D-hexosamine residues in N-acetyl-beta-D-hexosaminides.</text>
        <dbReference type="EC" id="3.2.1.52"/>
    </reaction>
</comment>
<comment type="pathway">
    <text evidence="1">Cell wall biogenesis; peptidoglycan recycling.</text>
</comment>
<comment type="subcellular location">
    <subcellularLocation>
        <location evidence="1">Cytoplasm</location>
    </subcellularLocation>
</comment>
<comment type="similarity">
    <text evidence="1">Belongs to the glycosyl hydrolase 3 family. NagZ subfamily.</text>
</comment>
<evidence type="ECO:0000255" key="1">
    <source>
        <dbReference type="HAMAP-Rule" id="MF_00364"/>
    </source>
</evidence>
<protein>
    <recommendedName>
        <fullName evidence="1">Beta-hexosaminidase</fullName>
        <ecNumber evidence="1">3.2.1.52</ecNumber>
    </recommendedName>
    <alternativeName>
        <fullName evidence="1">Beta-N-acetylhexosaminidase</fullName>
    </alternativeName>
    <alternativeName>
        <fullName evidence="1">N-acetyl-beta-glucosaminidase</fullName>
    </alternativeName>
</protein>
<dbReference type="EC" id="3.2.1.52" evidence="1"/>
<dbReference type="EMBL" id="AM167904">
    <property type="protein sequence ID" value="CAJ50067.1"/>
    <property type="molecule type" value="Genomic_DNA"/>
</dbReference>
<dbReference type="RefSeq" id="WP_012418116.1">
    <property type="nucleotide sequence ID" value="NC_010645.1"/>
</dbReference>
<dbReference type="SMR" id="Q2KXM7"/>
<dbReference type="STRING" id="360910.BAV2457"/>
<dbReference type="CAZy" id="GH3">
    <property type="family name" value="Glycoside Hydrolase Family 3"/>
</dbReference>
<dbReference type="GeneID" id="92934366"/>
<dbReference type="KEGG" id="bav:BAV2457"/>
<dbReference type="eggNOG" id="COG1472">
    <property type="taxonomic scope" value="Bacteria"/>
</dbReference>
<dbReference type="HOGENOM" id="CLU_008392_0_0_4"/>
<dbReference type="OrthoDB" id="9786661at2"/>
<dbReference type="UniPathway" id="UPA00544"/>
<dbReference type="Proteomes" id="UP000001977">
    <property type="component" value="Chromosome"/>
</dbReference>
<dbReference type="GO" id="GO:0005737">
    <property type="term" value="C:cytoplasm"/>
    <property type="evidence" value="ECO:0007669"/>
    <property type="project" value="UniProtKB-SubCell"/>
</dbReference>
<dbReference type="GO" id="GO:0004563">
    <property type="term" value="F:beta-N-acetylhexosaminidase activity"/>
    <property type="evidence" value="ECO:0007669"/>
    <property type="project" value="UniProtKB-UniRule"/>
</dbReference>
<dbReference type="GO" id="GO:0005975">
    <property type="term" value="P:carbohydrate metabolic process"/>
    <property type="evidence" value="ECO:0007669"/>
    <property type="project" value="InterPro"/>
</dbReference>
<dbReference type="GO" id="GO:0051301">
    <property type="term" value="P:cell division"/>
    <property type="evidence" value="ECO:0007669"/>
    <property type="project" value="UniProtKB-KW"/>
</dbReference>
<dbReference type="GO" id="GO:0071555">
    <property type="term" value="P:cell wall organization"/>
    <property type="evidence" value="ECO:0007669"/>
    <property type="project" value="UniProtKB-KW"/>
</dbReference>
<dbReference type="GO" id="GO:0009252">
    <property type="term" value="P:peptidoglycan biosynthetic process"/>
    <property type="evidence" value="ECO:0007669"/>
    <property type="project" value="UniProtKB-KW"/>
</dbReference>
<dbReference type="GO" id="GO:0009254">
    <property type="term" value="P:peptidoglycan turnover"/>
    <property type="evidence" value="ECO:0007669"/>
    <property type="project" value="UniProtKB-UniRule"/>
</dbReference>
<dbReference type="GO" id="GO:0008360">
    <property type="term" value="P:regulation of cell shape"/>
    <property type="evidence" value="ECO:0007669"/>
    <property type="project" value="UniProtKB-KW"/>
</dbReference>
<dbReference type="Gene3D" id="3.20.20.300">
    <property type="entry name" value="Glycoside hydrolase, family 3, N-terminal domain"/>
    <property type="match status" value="1"/>
</dbReference>
<dbReference type="HAMAP" id="MF_00364">
    <property type="entry name" value="NagZ"/>
    <property type="match status" value="1"/>
</dbReference>
<dbReference type="InterPro" id="IPR022956">
    <property type="entry name" value="Beta_hexosaminidase_bac"/>
</dbReference>
<dbReference type="InterPro" id="IPR019800">
    <property type="entry name" value="Glyco_hydro_3_AS"/>
</dbReference>
<dbReference type="InterPro" id="IPR001764">
    <property type="entry name" value="Glyco_hydro_3_N"/>
</dbReference>
<dbReference type="InterPro" id="IPR036962">
    <property type="entry name" value="Glyco_hydro_3_N_sf"/>
</dbReference>
<dbReference type="InterPro" id="IPR017853">
    <property type="entry name" value="Glycoside_hydrolase_SF"/>
</dbReference>
<dbReference type="InterPro" id="IPR050226">
    <property type="entry name" value="NagZ_Beta-hexosaminidase"/>
</dbReference>
<dbReference type="NCBIfam" id="NF003740">
    <property type="entry name" value="PRK05337.1"/>
    <property type="match status" value="1"/>
</dbReference>
<dbReference type="PANTHER" id="PTHR30480:SF13">
    <property type="entry name" value="BETA-HEXOSAMINIDASE"/>
    <property type="match status" value="1"/>
</dbReference>
<dbReference type="PANTHER" id="PTHR30480">
    <property type="entry name" value="BETA-HEXOSAMINIDASE-RELATED"/>
    <property type="match status" value="1"/>
</dbReference>
<dbReference type="Pfam" id="PF00933">
    <property type="entry name" value="Glyco_hydro_3"/>
    <property type="match status" value="1"/>
</dbReference>
<dbReference type="SUPFAM" id="SSF51445">
    <property type="entry name" value="(Trans)glycosidases"/>
    <property type="match status" value="1"/>
</dbReference>
<dbReference type="PROSITE" id="PS00775">
    <property type="entry name" value="GLYCOSYL_HYDROL_F3"/>
    <property type="match status" value="1"/>
</dbReference>
<accession>Q2KXM7</accession>
<feature type="chain" id="PRO_0000234911" description="Beta-hexosaminidase">
    <location>
        <begin position="1"/>
        <end position="350"/>
    </location>
</feature>
<feature type="active site" description="Proton donor/acceptor" evidence="1">
    <location>
        <position position="191"/>
    </location>
</feature>
<feature type="active site" description="Nucleophile" evidence="1">
    <location>
        <position position="262"/>
    </location>
</feature>
<feature type="binding site" evidence="1">
    <location>
        <position position="73"/>
    </location>
    <ligand>
        <name>substrate</name>
    </ligand>
</feature>
<feature type="binding site" evidence="1">
    <location>
        <position position="81"/>
    </location>
    <ligand>
        <name>substrate</name>
    </ligand>
</feature>
<feature type="binding site" evidence="1">
    <location>
        <position position="148"/>
    </location>
    <ligand>
        <name>substrate</name>
    </ligand>
</feature>
<feature type="binding site" evidence="1">
    <location>
        <begin position="178"/>
        <end position="179"/>
    </location>
    <ligand>
        <name>substrate</name>
    </ligand>
</feature>
<feature type="site" description="Important for catalytic activity" evidence="1">
    <location>
        <position position="189"/>
    </location>
</feature>
<keyword id="KW-0131">Cell cycle</keyword>
<keyword id="KW-0132">Cell division</keyword>
<keyword id="KW-0133">Cell shape</keyword>
<keyword id="KW-0961">Cell wall biogenesis/degradation</keyword>
<keyword id="KW-0963">Cytoplasm</keyword>
<keyword id="KW-0326">Glycosidase</keyword>
<keyword id="KW-0378">Hydrolase</keyword>
<keyword id="KW-0573">Peptidoglycan synthesis</keyword>
<keyword id="KW-1185">Reference proteome</keyword>